<protein>
    <recommendedName>
        <fullName evidence="1">Small ribosomal subunit protein uS14A</fullName>
    </recommendedName>
    <alternativeName>
        <fullName evidence="3">30S ribosomal protein S14</fullName>
    </alternativeName>
</protein>
<dbReference type="EMBL" id="AE004092">
    <property type="protein sequence ID" value="AAK34585.1"/>
    <property type="molecule type" value="Genomic_DNA"/>
</dbReference>
<dbReference type="EMBL" id="CP000017">
    <property type="protein sequence ID" value="AAZ52208.1"/>
    <property type="molecule type" value="Genomic_DNA"/>
</dbReference>
<dbReference type="RefSeq" id="NP_269864.1">
    <property type="nucleotide sequence ID" value="NC_002737.2"/>
</dbReference>
<dbReference type="SMR" id="P66424"/>
<dbReference type="PaxDb" id="1314-HKU360_01710"/>
<dbReference type="KEGG" id="spy:SPy_1871"/>
<dbReference type="KEGG" id="spz:M5005_Spy1590"/>
<dbReference type="PATRIC" id="fig|160490.10.peg.1624"/>
<dbReference type="HOGENOM" id="CLU_139869_0_0_9"/>
<dbReference type="OMA" id="RIKFRDL"/>
<dbReference type="PRO" id="PR:P66424"/>
<dbReference type="Proteomes" id="UP000000750">
    <property type="component" value="Chromosome"/>
</dbReference>
<dbReference type="GO" id="GO:0005737">
    <property type="term" value="C:cytoplasm"/>
    <property type="evidence" value="ECO:0007669"/>
    <property type="project" value="UniProtKB-ARBA"/>
</dbReference>
<dbReference type="GO" id="GO:0015935">
    <property type="term" value="C:small ribosomal subunit"/>
    <property type="evidence" value="ECO:0007669"/>
    <property type="project" value="TreeGrafter"/>
</dbReference>
<dbReference type="GO" id="GO:0019843">
    <property type="term" value="F:rRNA binding"/>
    <property type="evidence" value="ECO:0007669"/>
    <property type="project" value="UniProtKB-UniRule"/>
</dbReference>
<dbReference type="GO" id="GO:0003735">
    <property type="term" value="F:structural constituent of ribosome"/>
    <property type="evidence" value="ECO:0007669"/>
    <property type="project" value="InterPro"/>
</dbReference>
<dbReference type="GO" id="GO:0006412">
    <property type="term" value="P:translation"/>
    <property type="evidence" value="ECO:0007669"/>
    <property type="project" value="UniProtKB-UniRule"/>
</dbReference>
<dbReference type="Gene3D" id="4.10.830.10">
    <property type="entry name" value="30s Ribosomal Protein S14, Chain N"/>
    <property type="match status" value="1"/>
</dbReference>
<dbReference type="HAMAP" id="MF_00537">
    <property type="entry name" value="Ribosomal_uS14_1"/>
    <property type="match status" value="1"/>
</dbReference>
<dbReference type="InterPro" id="IPR001209">
    <property type="entry name" value="Ribosomal_uS14"/>
</dbReference>
<dbReference type="InterPro" id="IPR023036">
    <property type="entry name" value="Ribosomal_uS14_bac/plastid"/>
</dbReference>
<dbReference type="InterPro" id="IPR043140">
    <property type="entry name" value="Ribosomal_uS14_sf"/>
</dbReference>
<dbReference type="NCBIfam" id="NF006477">
    <property type="entry name" value="PRK08881.1"/>
    <property type="match status" value="1"/>
</dbReference>
<dbReference type="PANTHER" id="PTHR19836">
    <property type="entry name" value="30S RIBOSOMAL PROTEIN S14"/>
    <property type="match status" value="1"/>
</dbReference>
<dbReference type="PANTHER" id="PTHR19836:SF19">
    <property type="entry name" value="SMALL RIBOSOMAL SUBUNIT PROTEIN US14M"/>
    <property type="match status" value="1"/>
</dbReference>
<dbReference type="Pfam" id="PF00253">
    <property type="entry name" value="Ribosomal_S14"/>
    <property type="match status" value="1"/>
</dbReference>
<dbReference type="SUPFAM" id="SSF57716">
    <property type="entry name" value="Glucocorticoid receptor-like (DNA-binding domain)"/>
    <property type="match status" value="1"/>
</dbReference>
<proteinExistence type="inferred from homology"/>
<organism>
    <name type="scientific">Streptococcus pyogenes serotype M1</name>
    <dbReference type="NCBI Taxonomy" id="301447"/>
    <lineage>
        <taxon>Bacteria</taxon>
        <taxon>Bacillati</taxon>
        <taxon>Bacillota</taxon>
        <taxon>Bacilli</taxon>
        <taxon>Lactobacillales</taxon>
        <taxon>Streptococcaceae</taxon>
        <taxon>Streptococcus</taxon>
    </lineage>
</organism>
<keyword id="KW-1185">Reference proteome</keyword>
<keyword id="KW-0687">Ribonucleoprotein</keyword>
<keyword id="KW-0689">Ribosomal protein</keyword>
<keyword id="KW-0694">RNA-binding</keyword>
<keyword id="KW-0699">rRNA-binding</keyword>
<feature type="chain" id="PRO_0000130944" description="Small ribosomal subunit protein uS14A">
    <location>
        <begin position="1"/>
        <end position="89"/>
    </location>
</feature>
<feature type="region of interest" description="Disordered" evidence="2">
    <location>
        <begin position="34"/>
        <end position="54"/>
    </location>
</feature>
<comment type="function">
    <text evidence="1">Binds 16S rRNA, required for the assembly of 30S particles and may also be responsible for determining the conformation of the 16S rRNA at the A site.</text>
</comment>
<comment type="subunit">
    <text evidence="1">Part of the 30S ribosomal subunit. Contacts proteins S3 and S10.</text>
</comment>
<comment type="similarity">
    <text evidence="1">Belongs to the universal ribosomal protein uS14 family.</text>
</comment>
<name>RS14_STRP1</name>
<gene>
    <name evidence="1" type="primary">rpsN</name>
    <name type="synonym">rpsN.2</name>
    <name type="synonym">rpsN2</name>
    <name type="synonym">rs14</name>
    <name type="ordered locus">SPy_1871</name>
    <name type="ordered locus">M5005_Spy1590</name>
</gene>
<reference key="1">
    <citation type="journal article" date="2001" name="Proc. Natl. Acad. Sci. U.S.A.">
        <title>Complete genome sequence of an M1 strain of Streptococcus pyogenes.</title>
        <authorList>
            <person name="Ferretti J.J."/>
            <person name="McShan W.M."/>
            <person name="Ajdic D.J."/>
            <person name="Savic D.J."/>
            <person name="Savic G."/>
            <person name="Lyon K."/>
            <person name="Primeaux C."/>
            <person name="Sezate S."/>
            <person name="Suvorov A.N."/>
            <person name="Kenton S."/>
            <person name="Lai H.S."/>
            <person name="Lin S.P."/>
            <person name="Qian Y."/>
            <person name="Jia H.G."/>
            <person name="Najar F.Z."/>
            <person name="Ren Q."/>
            <person name="Zhu H."/>
            <person name="Song L."/>
            <person name="White J."/>
            <person name="Yuan X."/>
            <person name="Clifton S.W."/>
            <person name="Roe B.A."/>
            <person name="McLaughlin R.E."/>
        </authorList>
    </citation>
    <scope>NUCLEOTIDE SEQUENCE [LARGE SCALE GENOMIC DNA]</scope>
    <source>
        <strain>ATCC 700294 / SF370 / Serotype M1</strain>
    </source>
</reference>
<reference key="2">
    <citation type="journal article" date="2005" name="J. Infect. Dis.">
        <title>Evolutionary origin and emergence of a highly successful clone of serotype M1 group A Streptococcus involved multiple horizontal gene transfer events.</title>
        <authorList>
            <person name="Sumby P."/>
            <person name="Porcella S.F."/>
            <person name="Madrigal A.G."/>
            <person name="Barbian K.D."/>
            <person name="Virtaneva K."/>
            <person name="Ricklefs S.M."/>
            <person name="Sturdevant D.E."/>
            <person name="Graham M.R."/>
            <person name="Vuopio-Varkila J."/>
            <person name="Hoe N.P."/>
            <person name="Musser J.M."/>
        </authorList>
    </citation>
    <scope>NUCLEOTIDE SEQUENCE [LARGE SCALE GENOMIC DNA]</scope>
    <source>
        <strain>ATCC BAA-947 / MGAS5005 / Serotype M1</strain>
    </source>
</reference>
<evidence type="ECO:0000255" key="1">
    <source>
        <dbReference type="HAMAP-Rule" id="MF_00537"/>
    </source>
</evidence>
<evidence type="ECO:0000256" key="2">
    <source>
        <dbReference type="SAM" id="MobiDB-lite"/>
    </source>
</evidence>
<evidence type="ECO:0000305" key="3"/>
<sequence length="89" mass="10454">MAKKSKIAKYQKQLQLIEQYADLRRDLKAKGDYESLRKLPRDSNPNRLKNRDKIDGRPHAYMRKFGVSRINFRDLAHKGQLPGVTKASW</sequence>
<accession>P66424</accession>
<accession>Q48WR7</accession>
<accession>Q99Y47</accession>